<dbReference type="EMBL" id="AF230199">
    <property type="protein sequence ID" value="AAF91260.1"/>
    <property type="molecule type" value="Genomic_DNA"/>
</dbReference>
<dbReference type="RefSeq" id="WP_011171453.1">
    <property type="nucleotide sequence ID" value="NZ_JAGINF010000003.1"/>
</dbReference>
<dbReference type="GeneID" id="5324529"/>
<dbReference type="OMA" id="LIFEMKV"/>
<dbReference type="HAMAP" id="MF_01223">
    <property type="entry name" value="UPF0212"/>
    <property type="match status" value="1"/>
</dbReference>
<dbReference type="InterPro" id="IPR007564">
    <property type="entry name" value="UPF0212"/>
</dbReference>
<dbReference type="NCBIfam" id="NF003035">
    <property type="entry name" value="PRK03922.1"/>
    <property type="match status" value="1"/>
</dbReference>
<dbReference type="PANTHER" id="PTHR42199">
    <property type="entry name" value="UPF0212 PROTEIN MJ0068"/>
    <property type="match status" value="1"/>
</dbReference>
<dbReference type="PANTHER" id="PTHR42199:SF1">
    <property type="entry name" value="UPF0212 PROTEIN TK1194"/>
    <property type="match status" value="1"/>
</dbReference>
<dbReference type="Pfam" id="PF04475">
    <property type="entry name" value="DUF555"/>
    <property type="match status" value="1"/>
</dbReference>
<dbReference type="PIRSF" id="PIRSF016934">
    <property type="entry name" value="UCP016934"/>
    <property type="match status" value="1"/>
</dbReference>
<proteinExistence type="inferred from homology"/>
<name>Y1509_METMI</name>
<protein>
    <recommendedName>
        <fullName evidence="1">UPF0212 protein in gatA 3'region</fullName>
    </recommendedName>
</protein>
<feature type="chain" id="PRO_0000068279" description="UPF0212 protein in gatA 3'region">
    <location>
        <begin position="1"/>
        <end position="113"/>
    </location>
</feature>
<evidence type="ECO:0000255" key="1">
    <source>
        <dbReference type="HAMAP-Rule" id="MF_01223"/>
    </source>
</evidence>
<comment type="similarity">
    <text evidence="1">Belongs to the UPF0212 family.</text>
</comment>
<organism>
    <name type="scientific">Methanococcus maripaludis</name>
    <name type="common">Methanococcus deltae</name>
    <dbReference type="NCBI Taxonomy" id="39152"/>
    <lineage>
        <taxon>Archaea</taxon>
        <taxon>Methanobacteriati</taxon>
        <taxon>Methanobacteriota</taxon>
        <taxon>Methanomada group</taxon>
        <taxon>Methanococci</taxon>
        <taxon>Methanococcales</taxon>
        <taxon>Methanococcaceae</taxon>
        <taxon>Methanococcus</taxon>
    </lineage>
</organism>
<sequence length="113" mass="12049">MGNYHVTLQASYIAKNVEDVEDAIGVAISQIGKLLNKGSLDYVDIDVGLTICPKCGEPIDCVLVVAKTAIVGILLSMKVFNAESPEHAVRIAKSSIGRALKDIPLEDVDVVEI</sequence>
<accession>P0CW68</accession>
<accession>Q9P9E9</accession>
<reference key="1">
    <citation type="submission" date="2000-01" db="EMBL/GenBank/DDBJ databases">
        <title>Cloning of Methanococcus maripaludis pyruvate oxidoreductase.</title>
        <authorList>
            <person name="Lin W.C."/>
            <person name="Whitman W.B."/>
        </authorList>
    </citation>
    <scope>NUCLEOTIDE SEQUENCE [GENOMIC DNA]</scope>
    <source>
        <strain>ATCC 43000 / DSM 2067 / JCM 10722 / JJ</strain>
    </source>
</reference>